<keyword id="KW-0030">Aminoacyl-tRNA synthetase</keyword>
<keyword id="KW-0067">ATP-binding</keyword>
<keyword id="KW-0963">Cytoplasm</keyword>
<keyword id="KW-0436">Ligase</keyword>
<keyword id="KW-0479">Metal-binding</keyword>
<keyword id="KW-0547">Nucleotide-binding</keyword>
<keyword id="KW-0648">Protein biosynthesis</keyword>
<keyword id="KW-0694">RNA-binding</keyword>
<keyword id="KW-0820">tRNA-binding</keyword>
<keyword id="KW-0862">Zinc</keyword>
<proteinExistence type="inferred from homology"/>
<sequence length="733" mass="85456">MVRYMVTSALPYANGPIHAGHLAGAYLPADIFVRYLRLKGEEVIFISGTDEHGTPITFRALKEGKSPREIVDYYHEHIKTTFERAKISFDYFGRTELPVHYRISQDFFLKALENDHLIKKVSKQAYCEHDKMFLPDRYVIGTCPYCGAENQRGDQCEVCGHPLTPEELINPRCNICGNPITFRDSAHYYIKMQDFAEKLKEWVQSQEHWKPNVKNTVLGWIEEGLEERAITRDLNWGIPVPLDDEDVKGKVLYVWFEAPIGYISITVEHLKREGKENEWKKFWLNLDGGTKVIHFIGKDNIPFHAIFWPAFLMAYGKYKEEETEAEWLLPYDIPANEYLNLEGKKFSTSRNWAIWVHEFLDAFPADYLRYYLTAIMPETRDSDFSFADFKTKINEELVNNLGNFVHRALTFVNRYFDGVVPERGELDDLDRQAFEEIEKALKETGELISTYRFKDALRRVMELAIFGNRYFDYQKPWKTAKENRERTATTVNVSLQIVKVLGVLLEPFLPDASEKIWHLLNLEETKRWEFIEIPAGHRVRRAEILFRKVTDEDIIFFIVNYIARGNPESARLLLDKYYRTDDVVKVALERFGEKRKDEAMAILKSIYGERLEKKAKKEKKKEGGKVEYVKFEDFMKLDLRVGKIVDVQDHPNADKLYVVKVDLGNEVRQLVAGLKKYYSKDDLLNRYVVIIANLEPKKLRGIESQGMLLAADDGENVALLMPDKEVKLGARIR</sequence>
<dbReference type="EC" id="6.1.1.10" evidence="1"/>
<dbReference type="EMBL" id="CP000855">
    <property type="protein sequence ID" value="ACJ16066.1"/>
    <property type="molecule type" value="Genomic_DNA"/>
</dbReference>
<dbReference type="RefSeq" id="WP_012571538.1">
    <property type="nucleotide sequence ID" value="NC_011529.1"/>
</dbReference>
<dbReference type="SMR" id="B6YUN0"/>
<dbReference type="STRING" id="523850.TON_0579"/>
<dbReference type="GeneID" id="7016877"/>
<dbReference type="KEGG" id="ton:TON_0579"/>
<dbReference type="PATRIC" id="fig|523850.10.peg.579"/>
<dbReference type="eggNOG" id="arCOG00810">
    <property type="taxonomic scope" value="Archaea"/>
</dbReference>
<dbReference type="HOGENOM" id="CLU_009710_1_2_2"/>
<dbReference type="OrthoDB" id="371856at2157"/>
<dbReference type="Proteomes" id="UP000002727">
    <property type="component" value="Chromosome"/>
</dbReference>
<dbReference type="GO" id="GO:0005829">
    <property type="term" value="C:cytosol"/>
    <property type="evidence" value="ECO:0007669"/>
    <property type="project" value="TreeGrafter"/>
</dbReference>
<dbReference type="GO" id="GO:0005524">
    <property type="term" value="F:ATP binding"/>
    <property type="evidence" value="ECO:0007669"/>
    <property type="project" value="UniProtKB-UniRule"/>
</dbReference>
<dbReference type="GO" id="GO:0046872">
    <property type="term" value="F:metal ion binding"/>
    <property type="evidence" value="ECO:0007669"/>
    <property type="project" value="UniProtKB-KW"/>
</dbReference>
<dbReference type="GO" id="GO:0004825">
    <property type="term" value="F:methionine-tRNA ligase activity"/>
    <property type="evidence" value="ECO:0007669"/>
    <property type="project" value="UniProtKB-UniRule"/>
</dbReference>
<dbReference type="GO" id="GO:0000049">
    <property type="term" value="F:tRNA binding"/>
    <property type="evidence" value="ECO:0007669"/>
    <property type="project" value="UniProtKB-KW"/>
</dbReference>
<dbReference type="GO" id="GO:0006431">
    <property type="term" value="P:methionyl-tRNA aminoacylation"/>
    <property type="evidence" value="ECO:0007669"/>
    <property type="project" value="UniProtKB-UniRule"/>
</dbReference>
<dbReference type="CDD" id="cd07957">
    <property type="entry name" value="Anticodon_Ia_Met"/>
    <property type="match status" value="1"/>
</dbReference>
<dbReference type="CDD" id="cd00814">
    <property type="entry name" value="MetRS_core"/>
    <property type="match status" value="1"/>
</dbReference>
<dbReference type="CDD" id="cd02800">
    <property type="entry name" value="tRNA_bind_EcMetRS_like"/>
    <property type="match status" value="1"/>
</dbReference>
<dbReference type="FunFam" id="2.20.28.20:FF:000001">
    <property type="entry name" value="Methionine--tRNA ligase"/>
    <property type="match status" value="1"/>
</dbReference>
<dbReference type="FunFam" id="2.40.50.140:FF:000042">
    <property type="entry name" value="Methionine--tRNA ligase"/>
    <property type="match status" value="1"/>
</dbReference>
<dbReference type="Gene3D" id="3.40.50.620">
    <property type="entry name" value="HUPs"/>
    <property type="match status" value="1"/>
</dbReference>
<dbReference type="Gene3D" id="1.10.730.10">
    <property type="entry name" value="Isoleucyl-tRNA Synthetase, Domain 1"/>
    <property type="match status" value="1"/>
</dbReference>
<dbReference type="Gene3D" id="2.20.28.20">
    <property type="entry name" value="Methionyl-tRNA synthetase, Zn-domain"/>
    <property type="match status" value="1"/>
</dbReference>
<dbReference type="Gene3D" id="2.40.50.140">
    <property type="entry name" value="Nucleic acid-binding proteins"/>
    <property type="match status" value="1"/>
</dbReference>
<dbReference type="HAMAP" id="MF_00098">
    <property type="entry name" value="Met_tRNA_synth_type1"/>
    <property type="match status" value="1"/>
</dbReference>
<dbReference type="InterPro" id="IPR001412">
    <property type="entry name" value="aa-tRNA-synth_I_CS"/>
</dbReference>
<dbReference type="InterPro" id="IPR041872">
    <property type="entry name" value="Anticodon_Met"/>
</dbReference>
<dbReference type="InterPro" id="IPR004495">
    <property type="entry name" value="Met-tRNA-synth_bsu_C"/>
</dbReference>
<dbReference type="InterPro" id="IPR023458">
    <property type="entry name" value="Met-tRNA_ligase_1"/>
</dbReference>
<dbReference type="InterPro" id="IPR014758">
    <property type="entry name" value="Met-tRNA_synth"/>
</dbReference>
<dbReference type="InterPro" id="IPR015413">
    <property type="entry name" value="Methionyl/Leucyl_tRNA_Synth"/>
</dbReference>
<dbReference type="InterPro" id="IPR033911">
    <property type="entry name" value="MetRS_core"/>
</dbReference>
<dbReference type="InterPro" id="IPR029038">
    <property type="entry name" value="MetRS_Zn"/>
</dbReference>
<dbReference type="InterPro" id="IPR012340">
    <property type="entry name" value="NA-bd_OB-fold"/>
</dbReference>
<dbReference type="InterPro" id="IPR014729">
    <property type="entry name" value="Rossmann-like_a/b/a_fold"/>
</dbReference>
<dbReference type="InterPro" id="IPR002547">
    <property type="entry name" value="tRNA-bd_dom"/>
</dbReference>
<dbReference type="InterPro" id="IPR009080">
    <property type="entry name" value="tRNAsynth_Ia_anticodon-bd"/>
</dbReference>
<dbReference type="NCBIfam" id="TIGR00398">
    <property type="entry name" value="metG"/>
    <property type="match status" value="1"/>
</dbReference>
<dbReference type="NCBIfam" id="TIGR00399">
    <property type="entry name" value="metG_C_term"/>
    <property type="match status" value="1"/>
</dbReference>
<dbReference type="NCBIfam" id="NF001100">
    <property type="entry name" value="PRK00133.1"/>
    <property type="match status" value="1"/>
</dbReference>
<dbReference type="PANTHER" id="PTHR45765">
    <property type="entry name" value="METHIONINE--TRNA LIGASE"/>
    <property type="match status" value="1"/>
</dbReference>
<dbReference type="PANTHER" id="PTHR45765:SF1">
    <property type="entry name" value="METHIONINE--TRNA LIGASE, CYTOPLASMIC"/>
    <property type="match status" value="1"/>
</dbReference>
<dbReference type="Pfam" id="PF19303">
    <property type="entry name" value="Anticodon_3"/>
    <property type="match status" value="1"/>
</dbReference>
<dbReference type="Pfam" id="PF09334">
    <property type="entry name" value="tRNA-synt_1g"/>
    <property type="match status" value="1"/>
</dbReference>
<dbReference type="Pfam" id="PF01588">
    <property type="entry name" value="tRNA_bind"/>
    <property type="match status" value="1"/>
</dbReference>
<dbReference type="PRINTS" id="PR01041">
    <property type="entry name" value="TRNASYNTHMET"/>
</dbReference>
<dbReference type="SUPFAM" id="SSF47323">
    <property type="entry name" value="Anticodon-binding domain of a subclass of class I aminoacyl-tRNA synthetases"/>
    <property type="match status" value="1"/>
</dbReference>
<dbReference type="SUPFAM" id="SSF57770">
    <property type="entry name" value="Methionyl-tRNA synthetase (MetRS), Zn-domain"/>
    <property type="match status" value="1"/>
</dbReference>
<dbReference type="SUPFAM" id="SSF50249">
    <property type="entry name" value="Nucleic acid-binding proteins"/>
    <property type="match status" value="1"/>
</dbReference>
<dbReference type="SUPFAM" id="SSF52374">
    <property type="entry name" value="Nucleotidylyl transferase"/>
    <property type="match status" value="1"/>
</dbReference>
<dbReference type="PROSITE" id="PS00178">
    <property type="entry name" value="AA_TRNA_LIGASE_I"/>
    <property type="match status" value="1"/>
</dbReference>
<dbReference type="PROSITE" id="PS50886">
    <property type="entry name" value="TRBD"/>
    <property type="match status" value="1"/>
</dbReference>
<accession>B6YUN0</accession>
<gene>
    <name evidence="1" type="primary">metG</name>
    <name type="ordered locus">TON_0579</name>
</gene>
<name>SYM_THEON</name>
<protein>
    <recommendedName>
        <fullName evidence="1">Methionine--tRNA ligase</fullName>
        <ecNumber evidence="1">6.1.1.10</ecNumber>
    </recommendedName>
    <alternativeName>
        <fullName evidence="1">Methionyl-tRNA synthetase</fullName>
        <shortName evidence="1">MetRS</shortName>
    </alternativeName>
</protein>
<reference key="1">
    <citation type="journal article" date="2008" name="J. Bacteriol.">
        <title>The complete genome sequence of Thermococcus onnurineus NA1 reveals a mixed heterotrophic and carboxydotrophic metabolism.</title>
        <authorList>
            <person name="Lee H.S."/>
            <person name="Kang S.G."/>
            <person name="Bae S.S."/>
            <person name="Lim J.K."/>
            <person name="Cho Y."/>
            <person name="Kim Y.J."/>
            <person name="Jeon J.H."/>
            <person name="Cha S.-S."/>
            <person name="Kwon K.K."/>
            <person name="Kim H.-T."/>
            <person name="Park C.-J."/>
            <person name="Lee H.-W."/>
            <person name="Kim S.I."/>
            <person name="Chun J."/>
            <person name="Colwell R.R."/>
            <person name="Kim S.-J."/>
            <person name="Lee J.-H."/>
        </authorList>
    </citation>
    <scope>NUCLEOTIDE SEQUENCE [LARGE SCALE GENOMIC DNA]</scope>
    <source>
        <strain>NA1</strain>
    </source>
</reference>
<evidence type="ECO:0000255" key="1">
    <source>
        <dbReference type="HAMAP-Rule" id="MF_00098"/>
    </source>
</evidence>
<organism>
    <name type="scientific">Thermococcus onnurineus (strain NA1)</name>
    <dbReference type="NCBI Taxonomy" id="523850"/>
    <lineage>
        <taxon>Archaea</taxon>
        <taxon>Methanobacteriati</taxon>
        <taxon>Methanobacteriota</taxon>
        <taxon>Thermococci</taxon>
        <taxon>Thermococcales</taxon>
        <taxon>Thermococcaceae</taxon>
        <taxon>Thermococcus</taxon>
    </lineage>
</organism>
<comment type="function">
    <text evidence="1">Is required not only for elongation of protein synthesis but also for the initiation of all mRNA translation through initiator tRNA(fMet) aminoacylation.</text>
</comment>
<comment type="catalytic activity">
    <reaction evidence="1">
        <text>tRNA(Met) + L-methionine + ATP = L-methionyl-tRNA(Met) + AMP + diphosphate</text>
        <dbReference type="Rhea" id="RHEA:13481"/>
        <dbReference type="Rhea" id="RHEA-COMP:9667"/>
        <dbReference type="Rhea" id="RHEA-COMP:9698"/>
        <dbReference type="ChEBI" id="CHEBI:30616"/>
        <dbReference type="ChEBI" id="CHEBI:33019"/>
        <dbReference type="ChEBI" id="CHEBI:57844"/>
        <dbReference type="ChEBI" id="CHEBI:78442"/>
        <dbReference type="ChEBI" id="CHEBI:78530"/>
        <dbReference type="ChEBI" id="CHEBI:456215"/>
        <dbReference type="EC" id="6.1.1.10"/>
    </reaction>
</comment>
<comment type="cofactor">
    <cofactor evidence="1">
        <name>Zn(2+)</name>
        <dbReference type="ChEBI" id="CHEBI:29105"/>
    </cofactor>
    <text evidence="1">Binds 1 zinc ion per subunit.</text>
</comment>
<comment type="subunit">
    <text evidence="1">Homodimer.</text>
</comment>
<comment type="subcellular location">
    <subcellularLocation>
        <location evidence="1">Cytoplasm</location>
    </subcellularLocation>
</comment>
<comment type="similarity">
    <text evidence="1">Belongs to the class-I aminoacyl-tRNA synthetase family. MetG type 1 subfamily.</text>
</comment>
<feature type="chain" id="PRO_1000093739" description="Methionine--tRNA ligase">
    <location>
        <begin position="1"/>
        <end position="733"/>
    </location>
</feature>
<feature type="domain" description="tRNA-binding" evidence="1">
    <location>
        <begin position="633"/>
        <end position="733"/>
    </location>
</feature>
<feature type="short sequence motif" description="'HIGH' region">
    <location>
        <begin position="11"/>
        <end position="21"/>
    </location>
</feature>
<feature type="short sequence motif" description="'KMSKS' region">
    <location>
        <begin position="345"/>
        <end position="349"/>
    </location>
</feature>
<feature type="binding site" evidence="1">
    <location>
        <position position="143"/>
    </location>
    <ligand>
        <name>Zn(2+)</name>
        <dbReference type="ChEBI" id="CHEBI:29105"/>
    </ligand>
</feature>
<feature type="binding site" evidence="1">
    <location>
        <position position="146"/>
    </location>
    <ligand>
        <name>Zn(2+)</name>
        <dbReference type="ChEBI" id="CHEBI:29105"/>
    </ligand>
</feature>
<feature type="binding site" evidence="1">
    <location>
        <position position="156"/>
    </location>
    <ligand>
        <name>Zn(2+)</name>
        <dbReference type="ChEBI" id="CHEBI:29105"/>
    </ligand>
</feature>
<feature type="binding site" evidence="1">
    <location>
        <position position="159"/>
    </location>
    <ligand>
        <name>Zn(2+)</name>
        <dbReference type="ChEBI" id="CHEBI:29105"/>
    </ligand>
</feature>
<feature type="binding site" evidence="1">
    <location>
        <position position="348"/>
    </location>
    <ligand>
        <name>ATP</name>
        <dbReference type="ChEBI" id="CHEBI:30616"/>
    </ligand>
</feature>